<protein>
    <recommendedName>
        <fullName evidence="1">S-adenosylmethionine synthase</fullName>
        <shortName evidence="1">AdoMet synthase</shortName>
        <ecNumber evidence="1">2.5.1.6</ecNumber>
    </recommendedName>
    <alternativeName>
        <fullName evidence="1">MAT</fullName>
    </alternativeName>
    <alternativeName>
        <fullName evidence="1">Methionine adenosyltransferase</fullName>
    </alternativeName>
</protein>
<reference key="1">
    <citation type="submission" date="2008-02" db="EMBL/GenBank/DDBJ databases">
        <title>Complete sequence of Escherichia coli C str. ATCC 8739.</title>
        <authorList>
            <person name="Copeland A."/>
            <person name="Lucas S."/>
            <person name="Lapidus A."/>
            <person name="Glavina del Rio T."/>
            <person name="Dalin E."/>
            <person name="Tice H."/>
            <person name="Bruce D."/>
            <person name="Goodwin L."/>
            <person name="Pitluck S."/>
            <person name="Kiss H."/>
            <person name="Brettin T."/>
            <person name="Detter J.C."/>
            <person name="Han C."/>
            <person name="Kuske C.R."/>
            <person name="Schmutz J."/>
            <person name="Larimer F."/>
            <person name="Land M."/>
            <person name="Hauser L."/>
            <person name="Kyrpides N."/>
            <person name="Mikhailova N."/>
            <person name="Ingram L."/>
            <person name="Richardson P."/>
        </authorList>
    </citation>
    <scope>NUCLEOTIDE SEQUENCE [LARGE SCALE GENOMIC DNA]</scope>
    <source>
        <strain>ATCC 8739 / DSM 1576 / NBRC 3972 / NCIMB 8545 / WDCM 00012 / Crooks</strain>
    </source>
</reference>
<evidence type="ECO:0000255" key="1">
    <source>
        <dbReference type="HAMAP-Rule" id="MF_00086"/>
    </source>
</evidence>
<proteinExistence type="inferred from homology"/>
<feature type="chain" id="PRO_1000075374" description="S-adenosylmethionine synthase">
    <location>
        <begin position="1"/>
        <end position="384"/>
    </location>
</feature>
<feature type="region of interest" description="Flexible loop" evidence="1">
    <location>
        <begin position="99"/>
        <end position="109"/>
    </location>
</feature>
<feature type="binding site" description="in other chain" evidence="1">
    <location>
        <position position="15"/>
    </location>
    <ligand>
        <name>ATP</name>
        <dbReference type="ChEBI" id="CHEBI:30616"/>
        <note>ligand shared between two neighboring subunits</note>
    </ligand>
</feature>
<feature type="binding site" evidence="1">
    <location>
        <position position="17"/>
    </location>
    <ligand>
        <name>Mg(2+)</name>
        <dbReference type="ChEBI" id="CHEBI:18420"/>
    </ligand>
</feature>
<feature type="binding site" evidence="1">
    <location>
        <position position="43"/>
    </location>
    <ligand>
        <name>K(+)</name>
        <dbReference type="ChEBI" id="CHEBI:29103"/>
    </ligand>
</feature>
<feature type="binding site" description="in other chain" evidence="1">
    <location>
        <position position="56"/>
    </location>
    <ligand>
        <name>L-methionine</name>
        <dbReference type="ChEBI" id="CHEBI:57844"/>
        <note>ligand shared between two neighboring subunits</note>
    </ligand>
</feature>
<feature type="binding site" description="in other chain" evidence="1">
    <location>
        <position position="99"/>
    </location>
    <ligand>
        <name>L-methionine</name>
        <dbReference type="ChEBI" id="CHEBI:57844"/>
        <note>ligand shared between two neighboring subunits</note>
    </ligand>
</feature>
<feature type="binding site" description="in other chain" evidence="1">
    <location>
        <begin position="164"/>
        <end position="166"/>
    </location>
    <ligand>
        <name>ATP</name>
        <dbReference type="ChEBI" id="CHEBI:30616"/>
        <note>ligand shared between two neighboring subunits</note>
    </ligand>
</feature>
<feature type="binding site" description="in other chain" evidence="1">
    <location>
        <begin position="230"/>
        <end position="231"/>
    </location>
    <ligand>
        <name>ATP</name>
        <dbReference type="ChEBI" id="CHEBI:30616"/>
        <note>ligand shared between two neighboring subunits</note>
    </ligand>
</feature>
<feature type="binding site" evidence="1">
    <location>
        <position position="239"/>
    </location>
    <ligand>
        <name>ATP</name>
        <dbReference type="ChEBI" id="CHEBI:30616"/>
        <note>ligand shared between two neighboring subunits</note>
    </ligand>
</feature>
<feature type="binding site" evidence="1">
    <location>
        <position position="239"/>
    </location>
    <ligand>
        <name>L-methionine</name>
        <dbReference type="ChEBI" id="CHEBI:57844"/>
        <note>ligand shared between two neighboring subunits</note>
    </ligand>
</feature>
<feature type="binding site" description="in other chain" evidence="1">
    <location>
        <begin position="245"/>
        <end position="246"/>
    </location>
    <ligand>
        <name>ATP</name>
        <dbReference type="ChEBI" id="CHEBI:30616"/>
        <note>ligand shared between two neighboring subunits</note>
    </ligand>
</feature>
<feature type="binding site" evidence="1">
    <location>
        <position position="262"/>
    </location>
    <ligand>
        <name>ATP</name>
        <dbReference type="ChEBI" id="CHEBI:30616"/>
        <note>ligand shared between two neighboring subunits</note>
    </ligand>
</feature>
<feature type="binding site" evidence="1">
    <location>
        <position position="266"/>
    </location>
    <ligand>
        <name>ATP</name>
        <dbReference type="ChEBI" id="CHEBI:30616"/>
        <note>ligand shared between two neighboring subunits</note>
    </ligand>
</feature>
<feature type="binding site" description="in other chain" evidence="1">
    <location>
        <position position="270"/>
    </location>
    <ligand>
        <name>L-methionine</name>
        <dbReference type="ChEBI" id="CHEBI:57844"/>
        <note>ligand shared between two neighboring subunits</note>
    </ligand>
</feature>
<gene>
    <name evidence="1" type="primary">metK</name>
    <name type="ordered locus">EcolC_0772</name>
</gene>
<keyword id="KW-0067">ATP-binding</keyword>
<keyword id="KW-0963">Cytoplasm</keyword>
<keyword id="KW-0460">Magnesium</keyword>
<keyword id="KW-0479">Metal-binding</keyword>
<keyword id="KW-0547">Nucleotide-binding</keyword>
<keyword id="KW-0554">One-carbon metabolism</keyword>
<keyword id="KW-0630">Potassium</keyword>
<keyword id="KW-0808">Transferase</keyword>
<comment type="function">
    <text evidence="1">Catalyzes the formation of S-adenosylmethionine (AdoMet) from methionine and ATP. The overall synthetic reaction is composed of two sequential steps, AdoMet formation and the subsequent tripolyphosphate hydrolysis which occurs prior to release of AdoMet from the enzyme.</text>
</comment>
<comment type="catalytic activity">
    <reaction evidence="1">
        <text>L-methionine + ATP + H2O = S-adenosyl-L-methionine + phosphate + diphosphate</text>
        <dbReference type="Rhea" id="RHEA:21080"/>
        <dbReference type="ChEBI" id="CHEBI:15377"/>
        <dbReference type="ChEBI" id="CHEBI:30616"/>
        <dbReference type="ChEBI" id="CHEBI:33019"/>
        <dbReference type="ChEBI" id="CHEBI:43474"/>
        <dbReference type="ChEBI" id="CHEBI:57844"/>
        <dbReference type="ChEBI" id="CHEBI:59789"/>
        <dbReference type="EC" id="2.5.1.6"/>
    </reaction>
</comment>
<comment type="cofactor">
    <cofactor evidence="1">
        <name>Mg(2+)</name>
        <dbReference type="ChEBI" id="CHEBI:18420"/>
    </cofactor>
    <text evidence="1">Binds 2 divalent ions per subunit.</text>
</comment>
<comment type="cofactor">
    <cofactor evidence="1">
        <name>K(+)</name>
        <dbReference type="ChEBI" id="CHEBI:29103"/>
    </cofactor>
    <text evidence="1">Binds 1 potassium ion per subunit.</text>
</comment>
<comment type="pathway">
    <text evidence="1">Amino-acid biosynthesis; S-adenosyl-L-methionine biosynthesis; S-adenosyl-L-methionine from L-methionine: step 1/1.</text>
</comment>
<comment type="subunit">
    <text evidence="1">Homotetramer; dimer of dimers.</text>
</comment>
<comment type="subcellular location">
    <subcellularLocation>
        <location evidence="1">Cytoplasm</location>
    </subcellularLocation>
</comment>
<comment type="similarity">
    <text evidence="1">Belongs to the AdoMet synthase family.</text>
</comment>
<dbReference type="EC" id="2.5.1.6" evidence="1"/>
<dbReference type="EMBL" id="CP000946">
    <property type="protein sequence ID" value="ACA76444.1"/>
    <property type="molecule type" value="Genomic_DNA"/>
</dbReference>
<dbReference type="RefSeq" id="WP_001062128.1">
    <property type="nucleotide sequence ID" value="NZ_MTFT01000004.1"/>
</dbReference>
<dbReference type="SMR" id="B1IT65"/>
<dbReference type="GeneID" id="93779055"/>
<dbReference type="KEGG" id="ecl:EcolC_0772"/>
<dbReference type="HOGENOM" id="CLU_041802_1_1_6"/>
<dbReference type="UniPathway" id="UPA00315">
    <property type="reaction ID" value="UER00080"/>
</dbReference>
<dbReference type="GO" id="GO:0005737">
    <property type="term" value="C:cytoplasm"/>
    <property type="evidence" value="ECO:0007669"/>
    <property type="project" value="UniProtKB-SubCell"/>
</dbReference>
<dbReference type="GO" id="GO:0005524">
    <property type="term" value="F:ATP binding"/>
    <property type="evidence" value="ECO:0007669"/>
    <property type="project" value="UniProtKB-UniRule"/>
</dbReference>
<dbReference type="GO" id="GO:0000287">
    <property type="term" value="F:magnesium ion binding"/>
    <property type="evidence" value="ECO:0007669"/>
    <property type="project" value="UniProtKB-UniRule"/>
</dbReference>
<dbReference type="GO" id="GO:0004478">
    <property type="term" value="F:methionine adenosyltransferase activity"/>
    <property type="evidence" value="ECO:0007669"/>
    <property type="project" value="UniProtKB-UniRule"/>
</dbReference>
<dbReference type="GO" id="GO:0006730">
    <property type="term" value="P:one-carbon metabolic process"/>
    <property type="evidence" value="ECO:0007669"/>
    <property type="project" value="UniProtKB-KW"/>
</dbReference>
<dbReference type="GO" id="GO:0006556">
    <property type="term" value="P:S-adenosylmethionine biosynthetic process"/>
    <property type="evidence" value="ECO:0007669"/>
    <property type="project" value="UniProtKB-UniRule"/>
</dbReference>
<dbReference type="CDD" id="cd18079">
    <property type="entry name" value="S-AdoMet_synt"/>
    <property type="match status" value="1"/>
</dbReference>
<dbReference type="FunFam" id="3.30.300.10:FF:000001">
    <property type="entry name" value="S-adenosylmethionine synthase"/>
    <property type="match status" value="1"/>
</dbReference>
<dbReference type="FunFam" id="3.30.300.10:FF:000003">
    <property type="entry name" value="S-adenosylmethionine synthase"/>
    <property type="match status" value="1"/>
</dbReference>
<dbReference type="Gene3D" id="3.30.300.10">
    <property type="match status" value="3"/>
</dbReference>
<dbReference type="HAMAP" id="MF_00086">
    <property type="entry name" value="S_AdoMet_synth1"/>
    <property type="match status" value="1"/>
</dbReference>
<dbReference type="InterPro" id="IPR022631">
    <property type="entry name" value="ADOMET_SYNTHASE_CS"/>
</dbReference>
<dbReference type="InterPro" id="IPR022630">
    <property type="entry name" value="S-AdoMet_synt_C"/>
</dbReference>
<dbReference type="InterPro" id="IPR022629">
    <property type="entry name" value="S-AdoMet_synt_central"/>
</dbReference>
<dbReference type="InterPro" id="IPR022628">
    <property type="entry name" value="S-AdoMet_synt_N"/>
</dbReference>
<dbReference type="InterPro" id="IPR002133">
    <property type="entry name" value="S-AdoMet_synthetase"/>
</dbReference>
<dbReference type="InterPro" id="IPR022636">
    <property type="entry name" value="S-AdoMet_synthetase_sfam"/>
</dbReference>
<dbReference type="NCBIfam" id="TIGR01034">
    <property type="entry name" value="metK"/>
    <property type="match status" value="1"/>
</dbReference>
<dbReference type="PANTHER" id="PTHR11964">
    <property type="entry name" value="S-ADENOSYLMETHIONINE SYNTHETASE"/>
    <property type="match status" value="1"/>
</dbReference>
<dbReference type="Pfam" id="PF02773">
    <property type="entry name" value="S-AdoMet_synt_C"/>
    <property type="match status" value="1"/>
</dbReference>
<dbReference type="Pfam" id="PF02772">
    <property type="entry name" value="S-AdoMet_synt_M"/>
    <property type="match status" value="1"/>
</dbReference>
<dbReference type="Pfam" id="PF00438">
    <property type="entry name" value="S-AdoMet_synt_N"/>
    <property type="match status" value="1"/>
</dbReference>
<dbReference type="PIRSF" id="PIRSF000497">
    <property type="entry name" value="MAT"/>
    <property type="match status" value="1"/>
</dbReference>
<dbReference type="SUPFAM" id="SSF55973">
    <property type="entry name" value="S-adenosylmethionine synthetase"/>
    <property type="match status" value="3"/>
</dbReference>
<dbReference type="PROSITE" id="PS00376">
    <property type="entry name" value="ADOMET_SYNTHASE_1"/>
    <property type="match status" value="1"/>
</dbReference>
<dbReference type="PROSITE" id="PS00377">
    <property type="entry name" value="ADOMET_SYNTHASE_2"/>
    <property type="match status" value="1"/>
</dbReference>
<name>METK_ECOLC</name>
<sequence length="384" mass="41952">MAKHLFTSESVSEGHPDKIADQISDAVLDAILEQDPKARVACETYVKTGMVLVGGEITTSAWVDIEEITRNTVREIGYVHSDMGFDANSCAVLSAIGKQSPDINQGVDRADPLEQGAGDQGLMFGYATNETDVLMPAPITYAHRLVQRQAEVRKNGTLPWLRPDAKSQVTFQYDDGKIVGIDAVVLSTQHSEEIDQKSLQEAVMEEIIKPILPAEWLTSATKFFINPTGRFVIGGPMGDCGLTGRKIIVDTYGGMARHGGGAFSGKDPSKVDRSAAYAARYVAKNIVAAGLADRCEIQVSYAIGVAEPTSIMVETFGTEKVPSEQLTLLVREFFDLRPYGLIQMLDLLHPIYKETAAYGHFGREHFPWEKTDKAQLLRDAAGLK</sequence>
<accession>B1IT65</accession>
<organism>
    <name type="scientific">Escherichia coli (strain ATCC 8739 / DSM 1576 / NBRC 3972 / NCIMB 8545 / WDCM 00012 / Crooks)</name>
    <dbReference type="NCBI Taxonomy" id="481805"/>
    <lineage>
        <taxon>Bacteria</taxon>
        <taxon>Pseudomonadati</taxon>
        <taxon>Pseudomonadota</taxon>
        <taxon>Gammaproteobacteria</taxon>
        <taxon>Enterobacterales</taxon>
        <taxon>Enterobacteriaceae</taxon>
        <taxon>Escherichia</taxon>
    </lineage>
</organism>